<protein>
    <recommendedName>
        <fullName>Zinc finger transcription factor family protein 30</fullName>
    </recommendedName>
</protein>
<reference key="1">
    <citation type="journal article" date="1994" name="Nature">
        <title>2.2 Mb of contiguous nucleotide sequence from chromosome III of C. elegans.</title>
        <authorList>
            <person name="Wilson R."/>
            <person name="Ainscough R."/>
            <person name="Anderson K."/>
            <person name="Baynes C."/>
            <person name="Berks M."/>
            <person name="Bonfield J."/>
            <person name="Burton J."/>
            <person name="Connell M."/>
            <person name="Copsey T."/>
            <person name="Cooper J."/>
            <person name="Coulson A."/>
            <person name="Craxton M."/>
            <person name="Dear S."/>
            <person name="Du Z."/>
            <person name="Durbin R."/>
            <person name="Favello A."/>
            <person name="Fraser A."/>
            <person name="Fulton L."/>
            <person name="Gardner A."/>
            <person name="Green P."/>
            <person name="Hawkins T."/>
            <person name="Hillier L."/>
            <person name="Jier M."/>
            <person name="Johnston L."/>
            <person name="Jones M."/>
            <person name="Kershaw J."/>
            <person name="Kirsten J."/>
            <person name="Laisster N."/>
            <person name="Latreille P."/>
            <person name="Lightning J."/>
            <person name="Lloyd C."/>
            <person name="Mortimore B."/>
            <person name="O'Callaghan M."/>
            <person name="Parsons J."/>
            <person name="Percy C."/>
            <person name="Rifken L."/>
            <person name="Roopra A."/>
            <person name="Saunders D."/>
            <person name="Shownkeen R."/>
            <person name="Sims M."/>
            <person name="Smaldon N."/>
            <person name="Smith A."/>
            <person name="Smith M."/>
            <person name="Sonnhammer E."/>
            <person name="Staden R."/>
            <person name="Sulston J."/>
            <person name="Thierry-Mieg J."/>
            <person name="Thomas K."/>
            <person name="Vaudin M."/>
            <person name="Vaughan K."/>
            <person name="Waterston R."/>
            <person name="Watson A."/>
            <person name="Weinstock L."/>
            <person name="Wilkinson-Sproat J."/>
            <person name="Wohldman P."/>
        </authorList>
    </citation>
    <scope>NUCLEOTIDE SEQUENCE [LARGE SCALE GENOMIC DNA]</scope>
    <source>
        <strain>Bristol N2</strain>
    </source>
</reference>
<reference key="2">
    <citation type="journal article" date="1998" name="Science">
        <title>Genome sequence of the nematode C. elegans: a platform for investigating biology.</title>
        <authorList>
            <consortium name="The C. elegans sequencing consortium"/>
        </authorList>
    </citation>
    <scope>NUCLEOTIDE SEQUENCE [LARGE SCALE GENOMIC DNA]</scope>
    <source>
        <strain>Bristol N2</strain>
    </source>
</reference>
<proteinExistence type="predicted"/>
<dbReference type="EMBL" id="FO080280">
    <property type="protein sequence ID" value="CCD62568.1"/>
    <property type="molecule type" value="Genomic_DNA"/>
</dbReference>
<dbReference type="PIR" id="E88533">
    <property type="entry name" value="E88533"/>
</dbReference>
<dbReference type="RefSeq" id="NP_498892.1">
    <property type="nucleotide sequence ID" value="NM_066491.5"/>
</dbReference>
<dbReference type="BioGRID" id="47172">
    <property type="interactions" value="20"/>
</dbReference>
<dbReference type="FunCoup" id="P34303">
    <property type="interactions" value="192"/>
</dbReference>
<dbReference type="IntAct" id="P34303">
    <property type="interactions" value="16"/>
</dbReference>
<dbReference type="STRING" id="6239.C06E1.8.1"/>
<dbReference type="PaxDb" id="6239-C06E1.8"/>
<dbReference type="EnsemblMetazoa" id="C06E1.8.1">
    <property type="protein sequence ID" value="C06E1.8.1"/>
    <property type="gene ID" value="WBGene00015523"/>
</dbReference>
<dbReference type="GeneID" id="182317"/>
<dbReference type="KEGG" id="cel:CELE_C06E1.8"/>
<dbReference type="UCSC" id="C06E1.8">
    <property type="organism name" value="c. elegans"/>
</dbReference>
<dbReference type="AGR" id="WB:WBGene00015523"/>
<dbReference type="CTD" id="182317"/>
<dbReference type="WormBase" id="C06E1.8">
    <property type="protein sequence ID" value="CE00063"/>
    <property type="gene ID" value="WBGene00015523"/>
    <property type="gene designation" value="ztf-30"/>
</dbReference>
<dbReference type="eggNOG" id="KOG1721">
    <property type="taxonomic scope" value="Eukaryota"/>
</dbReference>
<dbReference type="GeneTree" id="ENSGT00970000196410"/>
<dbReference type="HOGENOM" id="CLU_714189_0_0_1"/>
<dbReference type="InParanoid" id="P34303"/>
<dbReference type="OMA" id="LECQEKT"/>
<dbReference type="OrthoDB" id="9909311at2759"/>
<dbReference type="PRO" id="PR:P34303"/>
<dbReference type="Proteomes" id="UP000001940">
    <property type="component" value="Chromosome III"/>
</dbReference>
<dbReference type="Bgee" id="WBGene00015523">
    <property type="expression patterns" value="Expressed in embryo and 3 other cell types or tissues"/>
</dbReference>
<dbReference type="GO" id="GO:0005634">
    <property type="term" value="C:nucleus"/>
    <property type="evidence" value="ECO:0007669"/>
    <property type="project" value="UniProtKB-SubCell"/>
</dbReference>
<dbReference type="GO" id="GO:0000981">
    <property type="term" value="F:DNA-binding transcription factor activity, RNA polymerase II-specific"/>
    <property type="evidence" value="ECO:0007669"/>
    <property type="project" value="UniProtKB-ARBA"/>
</dbReference>
<dbReference type="GO" id="GO:0000976">
    <property type="term" value="F:transcription cis-regulatory region binding"/>
    <property type="evidence" value="ECO:0007669"/>
    <property type="project" value="UniProtKB-ARBA"/>
</dbReference>
<dbReference type="GO" id="GO:0008270">
    <property type="term" value="F:zinc ion binding"/>
    <property type="evidence" value="ECO:0007669"/>
    <property type="project" value="UniProtKB-KW"/>
</dbReference>
<dbReference type="GO" id="GO:0045944">
    <property type="term" value="P:positive regulation of transcription by RNA polymerase II"/>
    <property type="evidence" value="ECO:0007669"/>
    <property type="project" value="UniProtKB-ARBA"/>
</dbReference>
<dbReference type="Gene3D" id="3.30.160.60">
    <property type="entry name" value="Classic Zinc Finger"/>
    <property type="match status" value="1"/>
</dbReference>
<dbReference type="InterPro" id="IPR050329">
    <property type="entry name" value="GLI_C2H2-zinc-finger"/>
</dbReference>
<dbReference type="InterPro" id="IPR036236">
    <property type="entry name" value="Znf_C2H2_sf"/>
</dbReference>
<dbReference type="InterPro" id="IPR013087">
    <property type="entry name" value="Znf_C2H2_type"/>
</dbReference>
<dbReference type="PANTHER" id="PTHR19818:SF163">
    <property type="entry name" value="C2H2-TYPE DOMAIN-CONTAINING PROTEIN"/>
    <property type="match status" value="1"/>
</dbReference>
<dbReference type="PANTHER" id="PTHR19818">
    <property type="entry name" value="ZINC FINGER PROTEIN ZIC AND GLI"/>
    <property type="match status" value="1"/>
</dbReference>
<dbReference type="Pfam" id="PF00096">
    <property type="entry name" value="zf-C2H2"/>
    <property type="match status" value="1"/>
</dbReference>
<dbReference type="SMART" id="SM00355">
    <property type="entry name" value="ZnF_C2H2"/>
    <property type="match status" value="3"/>
</dbReference>
<dbReference type="SUPFAM" id="SSF57667">
    <property type="entry name" value="beta-beta-alpha zinc fingers"/>
    <property type="match status" value="2"/>
</dbReference>
<dbReference type="PROSITE" id="PS00028">
    <property type="entry name" value="ZINC_FINGER_C2H2_1"/>
    <property type="match status" value="2"/>
</dbReference>
<dbReference type="PROSITE" id="PS50157">
    <property type="entry name" value="ZINC_FINGER_C2H2_2"/>
    <property type="match status" value="2"/>
</dbReference>
<comment type="subcellular location">
    <subcellularLocation>
        <location evidence="3">Nucleus</location>
    </subcellularLocation>
</comment>
<feature type="chain" id="PRO_0000046900" description="Zinc finger transcription factor family protein 30">
    <location>
        <begin position="1"/>
        <end position="397"/>
    </location>
</feature>
<feature type="zinc finger region" description="C2H2-type 1" evidence="1">
    <location>
        <begin position="51"/>
        <end position="74"/>
    </location>
</feature>
<feature type="zinc finger region" description="C2H2-type 2" evidence="1">
    <location>
        <begin position="78"/>
        <end position="102"/>
    </location>
</feature>
<feature type="zinc finger region" description="C2H2-type 3" evidence="1">
    <location>
        <begin position="107"/>
        <end position="125"/>
    </location>
</feature>
<feature type="region of interest" description="Disordered" evidence="2">
    <location>
        <begin position="1"/>
        <end position="40"/>
    </location>
</feature>
<feature type="compositionally biased region" description="Acidic residues" evidence="2">
    <location>
        <begin position="14"/>
        <end position="27"/>
    </location>
</feature>
<name>ZTF30_CAEEL</name>
<keyword id="KW-0238">DNA-binding</keyword>
<keyword id="KW-0479">Metal-binding</keyword>
<keyword id="KW-0539">Nucleus</keyword>
<keyword id="KW-1185">Reference proteome</keyword>
<keyword id="KW-0677">Repeat</keyword>
<keyword id="KW-0862">Zinc</keyword>
<keyword id="KW-0863">Zinc-finger</keyword>
<evidence type="ECO:0000255" key="1">
    <source>
        <dbReference type="PROSITE-ProRule" id="PRU00042"/>
    </source>
</evidence>
<evidence type="ECO:0000256" key="2">
    <source>
        <dbReference type="SAM" id="MobiDB-lite"/>
    </source>
</evidence>
<evidence type="ECO:0000305" key="3"/>
<sequence length="397" mass="44477">MKLEDDKIHSPTNTEEEGYGSDVEVENGTDISGSKGGSGVELKRPDLKGSFRCSICSKVFCHSSSLSRHRMQAHFKSYKCTVCRKDISSSESLRTHMFKQHHISRMYMCRCCNWAFPDKSLLHIHLQTATNNNDSNNNNNSVIPHGVINRSCHLITDPFQLIRTPLLNLPTPQSLESSVPSLPIASIPIPALQSPIRSQPQTPSWLANLPKPIPTTAPIFVADSKEKIKDEVEKPDVYTSQSPTCSSVSFKSDLSAFHQLCSDRALISSPLIDTASPSSSSSSSRISPRHECFDCHVSRTKILISENKCKLLEHKIGTMQQESLEANAQMNGLEQTVLRLRMEAHALREHNELFQRKLLECQNLAVKFLQNDKAHDASEMNSFLRILINNTILTRPF</sequence>
<organism>
    <name type="scientific">Caenorhabditis elegans</name>
    <dbReference type="NCBI Taxonomy" id="6239"/>
    <lineage>
        <taxon>Eukaryota</taxon>
        <taxon>Metazoa</taxon>
        <taxon>Ecdysozoa</taxon>
        <taxon>Nematoda</taxon>
        <taxon>Chromadorea</taxon>
        <taxon>Rhabditida</taxon>
        <taxon>Rhabditina</taxon>
        <taxon>Rhabditomorpha</taxon>
        <taxon>Rhabditoidea</taxon>
        <taxon>Rhabditidae</taxon>
        <taxon>Peloderinae</taxon>
        <taxon>Caenorhabditis</taxon>
    </lineage>
</organism>
<accession>P34303</accession>
<gene>
    <name type="primary">ztf-30</name>
    <name type="ORF">C06E1.8</name>
</gene>